<reference key="1">
    <citation type="submission" date="2003-03" db="EMBL/GenBank/DDBJ databases">
        <title>The complete genome sequence of Neisseria gonorrhoeae.</title>
        <authorList>
            <person name="Lewis L.A."/>
            <person name="Gillaspy A.F."/>
            <person name="McLaughlin R.E."/>
            <person name="Gipson M."/>
            <person name="Ducey T.F."/>
            <person name="Ownbey T."/>
            <person name="Hartman K."/>
            <person name="Nydick C."/>
            <person name="Carson M.B."/>
            <person name="Vaughn J."/>
            <person name="Thomson C."/>
            <person name="Song L."/>
            <person name="Lin S."/>
            <person name="Yuan X."/>
            <person name="Najar F."/>
            <person name="Zhan M."/>
            <person name="Ren Q."/>
            <person name="Zhu H."/>
            <person name="Qi S."/>
            <person name="Kenton S.M."/>
            <person name="Lai H."/>
            <person name="White J.D."/>
            <person name="Clifton S."/>
            <person name="Roe B.A."/>
            <person name="Dyer D.W."/>
        </authorList>
    </citation>
    <scope>NUCLEOTIDE SEQUENCE [LARGE SCALE GENOMIC DNA]</scope>
    <source>
        <strain>ATCC 700825 / FA 1090</strain>
    </source>
</reference>
<proteinExistence type="inferred from homology"/>
<keyword id="KW-1185">Reference proteome</keyword>
<feature type="chain" id="PRO_0000215727" description="ATP-dependent Clp protease adapter protein ClpS">
    <location>
        <begin position="1"/>
        <end position="104"/>
    </location>
</feature>
<dbReference type="EMBL" id="AE004969">
    <property type="protein sequence ID" value="AAW89152.2"/>
    <property type="molecule type" value="Genomic_DNA"/>
</dbReference>
<dbReference type="SMR" id="Q5F9I5"/>
<dbReference type="STRING" id="242231.NGO_0409"/>
<dbReference type="KEGG" id="ngo:NGO_0409"/>
<dbReference type="PATRIC" id="fig|242231.10.peg.492"/>
<dbReference type="HOGENOM" id="CLU_134358_1_0_4"/>
<dbReference type="Proteomes" id="UP000000535">
    <property type="component" value="Chromosome"/>
</dbReference>
<dbReference type="GO" id="GO:0030163">
    <property type="term" value="P:protein catabolic process"/>
    <property type="evidence" value="ECO:0007669"/>
    <property type="project" value="InterPro"/>
</dbReference>
<dbReference type="GO" id="GO:0006508">
    <property type="term" value="P:proteolysis"/>
    <property type="evidence" value="ECO:0007669"/>
    <property type="project" value="UniProtKB-UniRule"/>
</dbReference>
<dbReference type="FunFam" id="3.30.1390.10:FF:000002">
    <property type="entry name" value="ATP-dependent Clp protease adapter protein ClpS"/>
    <property type="match status" value="1"/>
</dbReference>
<dbReference type="Gene3D" id="3.30.1390.10">
    <property type="match status" value="1"/>
</dbReference>
<dbReference type="HAMAP" id="MF_00302">
    <property type="entry name" value="ClpS"/>
    <property type="match status" value="1"/>
</dbReference>
<dbReference type="InterPro" id="IPR022935">
    <property type="entry name" value="ClpS"/>
</dbReference>
<dbReference type="InterPro" id="IPR003769">
    <property type="entry name" value="ClpS_core"/>
</dbReference>
<dbReference type="InterPro" id="IPR014719">
    <property type="entry name" value="Ribosomal_bL12_C/ClpS-like"/>
</dbReference>
<dbReference type="NCBIfam" id="NF000672">
    <property type="entry name" value="PRK00033.1-5"/>
    <property type="match status" value="1"/>
</dbReference>
<dbReference type="PANTHER" id="PTHR33473:SF19">
    <property type="entry name" value="ATP-DEPENDENT CLP PROTEASE ADAPTER PROTEIN CLPS"/>
    <property type="match status" value="1"/>
</dbReference>
<dbReference type="PANTHER" id="PTHR33473">
    <property type="entry name" value="ATP-DEPENDENT CLP PROTEASE ADAPTER PROTEIN CLPS1, CHLOROPLASTIC"/>
    <property type="match status" value="1"/>
</dbReference>
<dbReference type="Pfam" id="PF02617">
    <property type="entry name" value="ClpS"/>
    <property type="match status" value="1"/>
</dbReference>
<dbReference type="SUPFAM" id="SSF54736">
    <property type="entry name" value="ClpS-like"/>
    <property type="match status" value="1"/>
</dbReference>
<protein>
    <recommendedName>
        <fullName evidence="1">ATP-dependent Clp protease adapter protein ClpS</fullName>
    </recommendedName>
</protein>
<accession>Q5F9I5</accession>
<sequence>MGHAMTAQHQSDTLLHRLNTLPPKRYGVFLLNDDYTTMEFVVEILTEIFMLGQEQAVAVMLSVHHEGKGLCGTYTRDIAQTKQQQVMQRAKAEGHPLQCIVEEI</sequence>
<name>CLPS_NEIG1</name>
<comment type="function">
    <text evidence="1">Involved in the modulation of the specificity of the ClpAP-mediated ATP-dependent protein degradation.</text>
</comment>
<comment type="subunit">
    <text evidence="1">Binds to the N-terminal domain of the chaperone ClpA.</text>
</comment>
<comment type="similarity">
    <text evidence="1">Belongs to the ClpS family.</text>
</comment>
<gene>
    <name evidence="1" type="primary">clpS</name>
    <name type="ordered locus">NGO_0409</name>
</gene>
<organism>
    <name type="scientific">Neisseria gonorrhoeae (strain ATCC 700825 / FA 1090)</name>
    <dbReference type="NCBI Taxonomy" id="242231"/>
    <lineage>
        <taxon>Bacteria</taxon>
        <taxon>Pseudomonadati</taxon>
        <taxon>Pseudomonadota</taxon>
        <taxon>Betaproteobacteria</taxon>
        <taxon>Neisseriales</taxon>
        <taxon>Neisseriaceae</taxon>
        <taxon>Neisseria</taxon>
    </lineage>
</organism>
<evidence type="ECO:0000255" key="1">
    <source>
        <dbReference type="HAMAP-Rule" id="MF_00302"/>
    </source>
</evidence>